<proteinExistence type="inferred from homology"/>
<keyword id="KW-0963">Cytoplasm</keyword>
<keyword id="KW-0489">Methyltransferase</keyword>
<keyword id="KW-0694">RNA-binding</keyword>
<keyword id="KW-0698">rRNA processing</keyword>
<keyword id="KW-0949">S-adenosyl-L-methionine</keyword>
<keyword id="KW-0808">Transferase</keyword>
<protein>
    <recommendedName>
        <fullName evidence="1">Ribosomal RNA small subunit methyltransferase F</fullName>
        <ecNumber evidence="1">2.1.1.178</ecNumber>
    </recommendedName>
    <alternativeName>
        <fullName evidence="1">16S rRNA m5C1407 methyltransferase</fullName>
    </alternativeName>
    <alternativeName>
        <fullName evidence="1">rRNA (cytosine-C(5)-)-methyltransferase RsmF</fullName>
    </alternativeName>
</protein>
<feature type="chain" id="PRO_1000147573" description="Ribosomal RNA small subunit methyltransferase F">
    <location>
        <begin position="1"/>
        <end position="479"/>
    </location>
</feature>
<feature type="active site" description="Nucleophile" evidence="1">
    <location>
        <position position="247"/>
    </location>
</feature>
<feature type="binding site" evidence="1">
    <location>
        <begin position="125"/>
        <end position="131"/>
    </location>
    <ligand>
        <name>S-adenosyl-L-methionine</name>
        <dbReference type="ChEBI" id="CHEBI:59789"/>
    </ligand>
</feature>
<feature type="binding site" evidence="1">
    <location>
        <position position="149"/>
    </location>
    <ligand>
        <name>S-adenosyl-L-methionine</name>
        <dbReference type="ChEBI" id="CHEBI:59789"/>
    </ligand>
</feature>
<feature type="binding site" evidence="1">
    <location>
        <position position="176"/>
    </location>
    <ligand>
        <name>S-adenosyl-L-methionine</name>
        <dbReference type="ChEBI" id="CHEBI:59789"/>
    </ligand>
</feature>
<feature type="binding site" evidence="1">
    <location>
        <position position="194"/>
    </location>
    <ligand>
        <name>S-adenosyl-L-methionine</name>
        <dbReference type="ChEBI" id="CHEBI:59789"/>
    </ligand>
</feature>
<gene>
    <name evidence="1" type="primary">rsmF</name>
    <name type="ordered locus">SeD_A1465</name>
</gene>
<comment type="function">
    <text evidence="1">Specifically methylates the cytosine at position 1407 (m5C1407) of 16S rRNA.</text>
</comment>
<comment type="catalytic activity">
    <reaction evidence="1">
        <text>cytidine(1407) in 16S rRNA + S-adenosyl-L-methionine = 5-methylcytidine(1407) in 16S rRNA + S-adenosyl-L-homocysteine + H(+)</text>
        <dbReference type="Rhea" id="RHEA:42756"/>
        <dbReference type="Rhea" id="RHEA-COMP:10223"/>
        <dbReference type="Rhea" id="RHEA-COMP:10224"/>
        <dbReference type="ChEBI" id="CHEBI:15378"/>
        <dbReference type="ChEBI" id="CHEBI:57856"/>
        <dbReference type="ChEBI" id="CHEBI:59789"/>
        <dbReference type="ChEBI" id="CHEBI:74483"/>
        <dbReference type="ChEBI" id="CHEBI:82748"/>
        <dbReference type="EC" id="2.1.1.178"/>
    </reaction>
</comment>
<comment type="subcellular location">
    <subcellularLocation>
        <location evidence="1">Cytoplasm</location>
    </subcellularLocation>
</comment>
<comment type="similarity">
    <text evidence="1">Belongs to the class I-like SAM-binding methyltransferase superfamily. RsmB/NOP family.</text>
</comment>
<organism>
    <name type="scientific">Salmonella dublin (strain CT_02021853)</name>
    <dbReference type="NCBI Taxonomy" id="439851"/>
    <lineage>
        <taxon>Bacteria</taxon>
        <taxon>Pseudomonadati</taxon>
        <taxon>Pseudomonadota</taxon>
        <taxon>Gammaproteobacteria</taxon>
        <taxon>Enterobacterales</taxon>
        <taxon>Enterobacteriaceae</taxon>
        <taxon>Salmonella</taxon>
    </lineage>
</organism>
<accession>B5FTI4</accession>
<evidence type="ECO:0000255" key="1">
    <source>
        <dbReference type="HAMAP-Rule" id="MF_01579"/>
    </source>
</evidence>
<dbReference type="EC" id="2.1.1.178" evidence="1"/>
<dbReference type="EMBL" id="CP001144">
    <property type="protein sequence ID" value="ACH76686.1"/>
    <property type="molecule type" value="Genomic_DNA"/>
</dbReference>
<dbReference type="RefSeq" id="WP_001531515.1">
    <property type="nucleotide sequence ID" value="NC_011205.1"/>
</dbReference>
<dbReference type="SMR" id="B5FTI4"/>
<dbReference type="KEGG" id="sed:SeD_A1465"/>
<dbReference type="HOGENOM" id="CLU_005316_6_2_6"/>
<dbReference type="Proteomes" id="UP000008322">
    <property type="component" value="Chromosome"/>
</dbReference>
<dbReference type="GO" id="GO:0005737">
    <property type="term" value="C:cytoplasm"/>
    <property type="evidence" value="ECO:0007669"/>
    <property type="project" value="UniProtKB-SubCell"/>
</dbReference>
<dbReference type="GO" id="GO:0003723">
    <property type="term" value="F:RNA binding"/>
    <property type="evidence" value="ECO:0007669"/>
    <property type="project" value="UniProtKB-KW"/>
</dbReference>
<dbReference type="GO" id="GO:0009383">
    <property type="term" value="F:rRNA (cytosine-C5-)-methyltransferase activity"/>
    <property type="evidence" value="ECO:0007669"/>
    <property type="project" value="TreeGrafter"/>
</dbReference>
<dbReference type="GO" id="GO:0070475">
    <property type="term" value="P:rRNA base methylation"/>
    <property type="evidence" value="ECO:0007669"/>
    <property type="project" value="TreeGrafter"/>
</dbReference>
<dbReference type="FunFam" id="3.10.450.720:FF:000001">
    <property type="entry name" value="Ribosomal RNA small subunit methyltransferase F"/>
    <property type="match status" value="1"/>
</dbReference>
<dbReference type="FunFam" id="3.40.50.150:FF:000079">
    <property type="entry name" value="Ribosomal RNA small subunit methyltransferase F"/>
    <property type="match status" value="1"/>
</dbReference>
<dbReference type="Gene3D" id="3.10.450.720">
    <property type="match status" value="1"/>
</dbReference>
<dbReference type="Gene3D" id="3.40.50.150">
    <property type="entry name" value="Vaccinia Virus protein VP39"/>
    <property type="match status" value="1"/>
</dbReference>
<dbReference type="HAMAP" id="MF_01579">
    <property type="entry name" value="16SrRNA_methyltr_F"/>
    <property type="match status" value="1"/>
</dbReference>
<dbReference type="InterPro" id="IPR031341">
    <property type="entry name" value="Methyltr_RsmF_N"/>
</dbReference>
<dbReference type="InterPro" id="IPR049560">
    <property type="entry name" value="MeTrfase_RsmB-F_NOP2_cat"/>
</dbReference>
<dbReference type="InterPro" id="IPR001678">
    <property type="entry name" value="MeTrfase_RsmB-F_NOP2_dom"/>
</dbReference>
<dbReference type="InterPro" id="IPR027391">
    <property type="entry name" value="Nol1_Nop2_Fmu_2"/>
</dbReference>
<dbReference type="InterPro" id="IPR011023">
    <property type="entry name" value="Nop2p"/>
</dbReference>
<dbReference type="InterPro" id="IPR023267">
    <property type="entry name" value="RCMT"/>
</dbReference>
<dbReference type="InterPro" id="IPR023545">
    <property type="entry name" value="rRNA_ssu_MeTfrase_F"/>
</dbReference>
<dbReference type="InterPro" id="IPR018314">
    <property type="entry name" value="RsmB/NOL1/NOP2-like_CS"/>
</dbReference>
<dbReference type="InterPro" id="IPR029063">
    <property type="entry name" value="SAM-dependent_MTases_sf"/>
</dbReference>
<dbReference type="InterPro" id="IPR048457">
    <property type="entry name" value="YebU_pre-PUA_dom"/>
</dbReference>
<dbReference type="NCBIfam" id="TIGR00446">
    <property type="entry name" value="nop2p"/>
    <property type="match status" value="1"/>
</dbReference>
<dbReference type="NCBIfam" id="NF008898">
    <property type="entry name" value="PRK11933.1"/>
    <property type="match status" value="1"/>
</dbReference>
<dbReference type="PANTHER" id="PTHR22807:SF30">
    <property type="entry name" value="28S RRNA (CYTOSINE(4447)-C(5))-METHYLTRANSFERASE-RELATED"/>
    <property type="match status" value="1"/>
</dbReference>
<dbReference type="PANTHER" id="PTHR22807">
    <property type="entry name" value="NOP2 YEAST -RELATED NOL1/NOP2/FMU SUN DOMAIN-CONTAINING"/>
    <property type="match status" value="1"/>
</dbReference>
<dbReference type="Pfam" id="PF01189">
    <property type="entry name" value="Methyltr_RsmB-F"/>
    <property type="match status" value="1"/>
</dbReference>
<dbReference type="Pfam" id="PF17125">
    <property type="entry name" value="Methyltr_RsmF_N"/>
    <property type="match status" value="1"/>
</dbReference>
<dbReference type="Pfam" id="PF13636">
    <property type="entry name" value="Methyltranf_PUA"/>
    <property type="match status" value="1"/>
</dbReference>
<dbReference type="Pfam" id="PF21150">
    <property type="entry name" value="YebU_pre-PUA_dom"/>
    <property type="match status" value="1"/>
</dbReference>
<dbReference type="PRINTS" id="PR02008">
    <property type="entry name" value="RCMTFAMILY"/>
</dbReference>
<dbReference type="SUPFAM" id="SSF53335">
    <property type="entry name" value="S-adenosyl-L-methionine-dependent methyltransferases"/>
    <property type="match status" value="1"/>
</dbReference>
<dbReference type="PROSITE" id="PS01153">
    <property type="entry name" value="NOL1_NOP2_SUN"/>
    <property type="match status" value="1"/>
</dbReference>
<dbReference type="PROSITE" id="PS51686">
    <property type="entry name" value="SAM_MT_RSMB_NOP"/>
    <property type="match status" value="1"/>
</dbReference>
<sequence>MAQHAVYFPDAFLTQMREAMPSTLSFDEFISACQRPLRRSIRINTLKISVADFLALIAPYGWSLTPIPWCHEGFWIERDDEEALPLGSTAEHLSGLFYIQEASSMLPVAALFADDNHPQRVMDMAAAPGSKTTQIAARMGNRGAILANEFSASRVKVLHANISRCGIANTALTHFDGRVFGAALPEMFDAILLDAPCSGEGVVRKDPDALKNWSPESNLDIAATQRELLNSAFHALRPGGTLVYSTCTLNRQENEEVCLWLKETYADAVEFLPLGDLFPDADRALTPEGFLHVFPQIYDCEGFFVARLRKMSSLPAMPAPGYKVGAFPFTPLKGREALHVTQAANAVGLLWDENLHLWQREKEVWLFPAEIESLIGKVRFSRLGIKLAESHNKGYRWQHEATIALACPTHAHAFELSVQEAEEWYRGRDIYPQTPPAADDVLVTFQHQPLGLAKRIGARIKNSYPRELVRDGKLFTGNS</sequence>
<name>RSMF_SALDC</name>
<reference key="1">
    <citation type="journal article" date="2011" name="J. Bacteriol.">
        <title>Comparative genomics of 28 Salmonella enterica isolates: evidence for CRISPR-mediated adaptive sublineage evolution.</title>
        <authorList>
            <person name="Fricke W.F."/>
            <person name="Mammel M.K."/>
            <person name="McDermott P.F."/>
            <person name="Tartera C."/>
            <person name="White D.G."/>
            <person name="Leclerc J.E."/>
            <person name="Ravel J."/>
            <person name="Cebula T.A."/>
        </authorList>
    </citation>
    <scope>NUCLEOTIDE SEQUENCE [LARGE SCALE GENOMIC DNA]</scope>
    <source>
        <strain>CT_02021853</strain>
    </source>
</reference>